<organism>
    <name type="scientific">Saccharomyces cerevisiae (strain ATCC 204508 / S288c)</name>
    <name type="common">Baker's yeast</name>
    <dbReference type="NCBI Taxonomy" id="559292"/>
    <lineage>
        <taxon>Eukaryota</taxon>
        <taxon>Fungi</taxon>
        <taxon>Dikarya</taxon>
        <taxon>Ascomycota</taxon>
        <taxon>Saccharomycotina</taxon>
        <taxon>Saccharomycetes</taxon>
        <taxon>Saccharomycetales</taxon>
        <taxon>Saccharomycetaceae</taxon>
        <taxon>Saccharomyces</taxon>
    </lineage>
</organism>
<comment type="function">
    <text>Required for polarized growth and efficient budding.</text>
</comment>
<comment type="function">
    <text>The M-Pol II complex possesses alpha-1,6-mannosyltransferase activity and is probably involved in the elongation of the mannan backbone of N-linked glycans on cell wall and periplasmic proteins.</text>
</comment>
<comment type="subunit">
    <text evidence="3">Component of the M-Pol II complex composed of ANP1, MNN9, MNN10, MNN11 and HOC1.</text>
</comment>
<comment type="interaction">
    <interactant intactId="EBI-11043">
        <id>P50108</id>
    </interactant>
    <interactant intactId="EBI-2595">
        <id>P32629</id>
        <label>ANP1</label>
    </interactant>
    <organismsDiffer>false</organismsDiffer>
    <experiments>4</experiments>
</comment>
<comment type="interaction">
    <interactant intactId="EBI-11043">
        <id>P50108</id>
    </interactant>
    <interactant intactId="EBI-8430">
        <id>P47124</id>
        <label>HOC1</label>
    </interactant>
    <organismsDiffer>false</organismsDiffer>
    <experiments>4</experiments>
</comment>
<comment type="interaction">
    <interactant intactId="EBI-11043">
        <id>P50108</id>
    </interactant>
    <interactant intactId="EBI-11052">
        <id>P46985</id>
        <label>MNN11</label>
    </interactant>
    <organismsDiffer>false</organismsDiffer>
    <experiments>6</experiments>
</comment>
<comment type="subcellular location">
    <subcellularLocation>
        <location>Endoplasmic reticulum membrane</location>
        <topology>Single-pass type II membrane protein</topology>
    </subcellularLocation>
    <subcellularLocation>
        <location>Golgi apparatus</location>
        <location>cis-Golgi network membrane</location>
        <topology>Single-pass type II membrane protein</topology>
    </subcellularLocation>
</comment>
<comment type="miscellaneous">
    <text evidence="4">Present with 6280 molecules/cell in log phase SD medium.</text>
</comment>
<comment type="similarity">
    <text evidence="5">Belongs to the glycosyltransferase 34 family.</text>
</comment>
<feature type="chain" id="PRO_0000215164" description="Probable alpha-1,6-mannosyltransferase MNN10">
    <location>
        <begin position="1"/>
        <end position="393"/>
    </location>
</feature>
<feature type="topological domain" description="Cytoplasmic" evidence="1">
    <location>
        <begin position="1"/>
        <end position="52"/>
    </location>
</feature>
<feature type="transmembrane region" description="Helical; Signal-anchor for type II membrane protein" evidence="1">
    <location>
        <begin position="53"/>
        <end position="73"/>
    </location>
</feature>
<feature type="topological domain" description="Lumenal" evidence="1">
    <location>
        <begin position="74"/>
        <end position="393"/>
    </location>
</feature>
<feature type="region of interest" description="Disordered" evidence="2">
    <location>
        <begin position="77"/>
        <end position="97"/>
    </location>
</feature>
<feature type="sequence conflict" description="In Ref. 2; AAC49280." evidence="5" ref="2">
    <original>N</original>
    <variation>I</variation>
    <location>
        <position position="238"/>
    </location>
</feature>
<dbReference type="EC" id="2.4.1.-"/>
<dbReference type="EMBL" id="L42540">
    <property type="protein sequence ID" value="AAB48372.1"/>
    <property type="molecule type" value="Genomic_DNA"/>
</dbReference>
<dbReference type="EMBL" id="U31446">
    <property type="protein sequence ID" value="AAC49280.1"/>
    <property type="molecule type" value="Genomic_DNA"/>
</dbReference>
<dbReference type="EMBL" id="Z49701">
    <property type="protein sequence ID" value="CAA89731.1"/>
    <property type="molecule type" value="Genomic_DNA"/>
</dbReference>
<dbReference type="EMBL" id="AY557792">
    <property type="protein sequence ID" value="AAS56118.1"/>
    <property type="molecule type" value="Genomic_DNA"/>
</dbReference>
<dbReference type="EMBL" id="BK006938">
    <property type="protein sequence ID" value="DAA12085.1"/>
    <property type="molecule type" value="Genomic_DNA"/>
</dbReference>
<dbReference type="PIR" id="S54541">
    <property type="entry name" value="S54541"/>
</dbReference>
<dbReference type="RefSeq" id="NP_010531.1">
    <property type="nucleotide sequence ID" value="NM_001180553.1"/>
</dbReference>
<dbReference type="SMR" id="P50108"/>
<dbReference type="BioGRID" id="32296">
    <property type="interactions" value="801"/>
</dbReference>
<dbReference type="ComplexPortal" id="CPX-1839">
    <property type="entry name" value="alpha-1,6-mannosyltransferase complex, M-Pol II variant"/>
</dbReference>
<dbReference type="DIP" id="DIP-892N"/>
<dbReference type="FunCoup" id="P50108">
    <property type="interactions" value="190"/>
</dbReference>
<dbReference type="IntAct" id="P50108">
    <property type="interactions" value="37"/>
</dbReference>
<dbReference type="MINT" id="P50108"/>
<dbReference type="STRING" id="4932.YDR245W"/>
<dbReference type="CAZy" id="GT34">
    <property type="family name" value="Glycosyltransferase Family 34"/>
</dbReference>
<dbReference type="iPTMnet" id="P50108"/>
<dbReference type="SwissPalm" id="P50108"/>
<dbReference type="PaxDb" id="4932-YDR245W"/>
<dbReference type="PeptideAtlas" id="P50108"/>
<dbReference type="EnsemblFungi" id="YDR245W_mRNA">
    <property type="protein sequence ID" value="YDR245W"/>
    <property type="gene ID" value="YDR245W"/>
</dbReference>
<dbReference type="GeneID" id="851832"/>
<dbReference type="KEGG" id="sce:YDR245W"/>
<dbReference type="AGR" id="SGD:S000002653"/>
<dbReference type="SGD" id="S000002653">
    <property type="gene designation" value="MNN10"/>
</dbReference>
<dbReference type="VEuPathDB" id="FungiDB:YDR245W"/>
<dbReference type="eggNOG" id="KOG4748">
    <property type="taxonomic scope" value="Eukaryota"/>
</dbReference>
<dbReference type="HOGENOM" id="CLU_021434_2_1_1"/>
<dbReference type="InParanoid" id="P50108"/>
<dbReference type="OMA" id="GWQKVDI"/>
<dbReference type="OrthoDB" id="407658at2759"/>
<dbReference type="BioCyc" id="MetaCyc:G3O-29818-MONOMER"/>
<dbReference type="BioCyc" id="YEAST:G3O-29818-MONOMER"/>
<dbReference type="BioGRID-ORCS" id="851832">
    <property type="hits" value="1 hit in 10 CRISPR screens"/>
</dbReference>
<dbReference type="PRO" id="PR:P50108"/>
<dbReference type="Proteomes" id="UP000002311">
    <property type="component" value="Chromosome IV"/>
</dbReference>
<dbReference type="RNAct" id="P50108">
    <property type="molecule type" value="protein"/>
</dbReference>
<dbReference type="GO" id="GO:0005783">
    <property type="term" value="C:endoplasmic reticulum"/>
    <property type="evidence" value="ECO:0007005"/>
    <property type="project" value="SGD"/>
</dbReference>
<dbReference type="GO" id="GO:0005789">
    <property type="term" value="C:endoplasmic reticulum membrane"/>
    <property type="evidence" value="ECO:0007669"/>
    <property type="project" value="UniProtKB-SubCell"/>
</dbReference>
<dbReference type="GO" id="GO:0000139">
    <property type="term" value="C:Golgi membrane"/>
    <property type="evidence" value="ECO:0000318"/>
    <property type="project" value="GO_Central"/>
</dbReference>
<dbReference type="GO" id="GO:0000136">
    <property type="term" value="C:mannan polymerase complex"/>
    <property type="evidence" value="ECO:0000314"/>
    <property type="project" value="UniProtKB"/>
</dbReference>
<dbReference type="GO" id="GO:0000009">
    <property type="term" value="F:alpha-1,6-mannosyltransferase activity"/>
    <property type="evidence" value="ECO:0000314"/>
    <property type="project" value="UniProtKB"/>
</dbReference>
<dbReference type="GO" id="GO:0007114">
    <property type="term" value="P:cell budding"/>
    <property type="evidence" value="ECO:0000315"/>
    <property type="project" value="UniProtKB"/>
</dbReference>
<dbReference type="GO" id="GO:0000032">
    <property type="term" value="P:cell wall mannoprotein biosynthetic process"/>
    <property type="evidence" value="ECO:0000314"/>
    <property type="project" value="UniProtKB"/>
</dbReference>
<dbReference type="GO" id="GO:0000917">
    <property type="term" value="P:division septum assembly"/>
    <property type="evidence" value="ECO:0000315"/>
    <property type="project" value="SGD"/>
</dbReference>
<dbReference type="GO" id="GO:0006487">
    <property type="term" value="P:protein N-linked glycosylation"/>
    <property type="evidence" value="ECO:0000315"/>
    <property type="project" value="SGD"/>
</dbReference>
<dbReference type="FunFam" id="3.90.550.10:FF:000117">
    <property type="entry name" value="Glycosyltransferase family 34 protein"/>
    <property type="match status" value="1"/>
</dbReference>
<dbReference type="Gene3D" id="3.90.550.10">
    <property type="entry name" value="Spore Coat Polysaccharide Biosynthesis Protein SpsA, Chain A"/>
    <property type="match status" value="1"/>
</dbReference>
<dbReference type="InterPro" id="IPR008630">
    <property type="entry name" value="Glyco_trans_34"/>
</dbReference>
<dbReference type="InterPro" id="IPR029044">
    <property type="entry name" value="Nucleotide-diphossugar_trans"/>
</dbReference>
<dbReference type="PANTHER" id="PTHR31306:SF5">
    <property type="entry name" value="ALPHA-1,6-MANNOSYLTRANSFERASE MNN10-RELATED"/>
    <property type="match status" value="1"/>
</dbReference>
<dbReference type="PANTHER" id="PTHR31306">
    <property type="entry name" value="ALPHA-1,6-MANNOSYLTRANSFERASE MNN11-RELATED"/>
    <property type="match status" value="1"/>
</dbReference>
<dbReference type="Pfam" id="PF05637">
    <property type="entry name" value="Glyco_transf_34"/>
    <property type="match status" value="1"/>
</dbReference>
<accession>P50108</accession>
<accession>D6VSM5</accession>
<proteinExistence type="evidence at protein level"/>
<sequence>MSSVPYNSQLPISNHLEYDEDEKKSRGSKLGLKYKMIYWRKTLCSSLARWRKLILLISLALFLFIWISDSTISRNPSTTSFQGQNSNDNKLSNTGSSINSKRYVPPYSKRSRWSFWNQDPRIVIILAANEGGGVLRWKNEQEWAIEGISIENKKAYAKRHGYALTIKDLTTSKRYSHEYREGWQKVDILRQTFREFPNAEWFWWLDLDTMIMEPSKSLEEHIFDRLETLADRELKSFNPLNLRDDIPYVDYSEEMEFLITQDCGGFNLGSFLIKNSEWSKLLLDMWWDPVLYEQKHMVWEHREQDALEALYENEPWIRSRIGFLPLRTINAFPPGACSEYSGDSRYFYSEKDHDFVVNMAGCNFGRDCWGEMQYYTTLMEKLNRKWYTRFFFP</sequence>
<reference key="1">
    <citation type="journal article" date="1996" name="Glycobiology">
        <title>Molecular and phenotypic analysis of the S. cerevisiae MNN10 gene identifies a family of related glycosyltransferases.</title>
        <authorList>
            <person name="Dean N."/>
            <person name="Poster J.B."/>
        </authorList>
    </citation>
    <scope>NUCLEOTIDE SEQUENCE [GENOMIC DNA]</scope>
    <scope>FUNCTION</scope>
    <scope>SUBCELLULAR LOCATION</scope>
</reference>
<reference key="2">
    <citation type="journal article" date="1996" name="J. Cell Biol.">
        <title>BED1, a gene encoding a galactosyltransferase homologue, is required for polarized growth and efficient bud emergence in Saccharomyces cerevisiae.</title>
        <authorList>
            <person name="Mondesert G."/>
            <person name="Reed S.I."/>
        </authorList>
    </citation>
    <scope>NUCLEOTIDE SEQUENCE [GENOMIC DNA]</scope>
    <scope>FUNCTION</scope>
    <scope>SUBCELLULAR LOCATION</scope>
    <source>
        <strain>BF264-15DU</strain>
    </source>
</reference>
<reference key="3">
    <citation type="journal article" date="1997" name="Nature">
        <title>The nucleotide sequence of Saccharomyces cerevisiae chromosome IV.</title>
        <authorList>
            <person name="Jacq C."/>
            <person name="Alt-Moerbe J."/>
            <person name="Andre B."/>
            <person name="Arnold W."/>
            <person name="Bahr A."/>
            <person name="Ballesta J.P.G."/>
            <person name="Bargues M."/>
            <person name="Baron L."/>
            <person name="Becker A."/>
            <person name="Biteau N."/>
            <person name="Bloecker H."/>
            <person name="Blugeon C."/>
            <person name="Boskovic J."/>
            <person name="Brandt P."/>
            <person name="Brueckner M."/>
            <person name="Buitrago M.J."/>
            <person name="Coster F."/>
            <person name="Delaveau T."/>
            <person name="del Rey F."/>
            <person name="Dujon B."/>
            <person name="Eide L.G."/>
            <person name="Garcia-Cantalejo J.M."/>
            <person name="Goffeau A."/>
            <person name="Gomez-Peris A."/>
            <person name="Granotier C."/>
            <person name="Hanemann V."/>
            <person name="Hankeln T."/>
            <person name="Hoheisel J.D."/>
            <person name="Jaeger W."/>
            <person name="Jimenez A."/>
            <person name="Jonniaux J.-L."/>
            <person name="Kraemer C."/>
            <person name="Kuester H."/>
            <person name="Laamanen P."/>
            <person name="Legros Y."/>
            <person name="Louis E.J."/>
            <person name="Moeller-Rieker S."/>
            <person name="Monnet A."/>
            <person name="Moro M."/>
            <person name="Mueller-Auer S."/>
            <person name="Nussbaumer B."/>
            <person name="Paricio N."/>
            <person name="Paulin L."/>
            <person name="Perea J."/>
            <person name="Perez-Alonso M."/>
            <person name="Perez-Ortin J.E."/>
            <person name="Pohl T.M."/>
            <person name="Prydz H."/>
            <person name="Purnelle B."/>
            <person name="Rasmussen S.W."/>
            <person name="Remacha M.A."/>
            <person name="Revuelta J.L."/>
            <person name="Rieger M."/>
            <person name="Salom D."/>
            <person name="Saluz H.P."/>
            <person name="Saiz J.E."/>
            <person name="Saren A.-M."/>
            <person name="Schaefer M."/>
            <person name="Scharfe M."/>
            <person name="Schmidt E.R."/>
            <person name="Schneider C."/>
            <person name="Scholler P."/>
            <person name="Schwarz S."/>
            <person name="Soler-Mira A."/>
            <person name="Urrestarazu L.A."/>
            <person name="Verhasselt P."/>
            <person name="Vissers S."/>
            <person name="Voet M."/>
            <person name="Volckaert G."/>
            <person name="Wagner G."/>
            <person name="Wambutt R."/>
            <person name="Wedler E."/>
            <person name="Wedler H."/>
            <person name="Woelfl S."/>
            <person name="Harris D.E."/>
            <person name="Bowman S."/>
            <person name="Brown D."/>
            <person name="Churcher C.M."/>
            <person name="Connor R."/>
            <person name="Dedman K."/>
            <person name="Gentles S."/>
            <person name="Hamlin N."/>
            <person name="Hunt S."/>
            <person name="Jones L."/>
            <person name="McDonald S."/>
            <person name="Murphy L.D."/>
            <person name="Niblett D."/>
            <person name="Odell C."/>
            <person name="Oliver K."/>
            <person name="Rajandream M.A."/>
            <person name="Richards C."/>
            <person name="Shore L."/>
            <person name="Walsh S.V."/>
            <person name="Barrell B.G."/>
            <person name="Dietrich F.S."/>
            <person name="Mulligan J.T."/>
            <person name="Allen E."/>
            <person name="Araujo R."/>
            <person name="Aviles E."/>
            <person name="Berno A."/>
            <person name="Carpenter J."/>
            <person name="Chen E."/>
            <person name="Cherry J.M."/>
            <person name="Chung E."/>
            <person name="Duncan M."/>
            <person name="Hunicke-Smith S."/>
            <person name="Hyman R.W."/>
            <person name="Komp C."/>
            <person name="Lashkari D."/>
            <person name="Lew H."/>
            <person name="Lin D."/>
            <person name="Mosedale D."/>
            <person name="Nakahara K."/>
            <person name="Namath A."/>
            <person name="Oefner P."/>
            <person name="Oh C."/>
            <person name="Petel F.X."/>
            <person name="Roberts D."/>
            <person name="Schramm S."/>
            <person name="Schroeder M."/>
            <person name="Shogren T."/>
            <person name="Shroff N."/>
            <person name="Winant A."/>
            <person name="Yelton M.A."/>
            <person name="Botstein D."/>
            <person name="Davis R.W."/>
            <person name="Johnston M."/>
            <person name="Andrews S."/>
            <person name="Brinkman R."/>
            <person name="Cooper J."/>
            <person name="Ding H."/>
            <person name="Du Z."/>
            <person name="Favello A."/>
            <person name="Fulton L."/>
            <person name="Gattung S."/>
            <person name="Greco T."/>
            <person name="Hallsworth K."/>
            <person name="Hawkins J."/>
            <person name="Hillier L.W."/>
            <person name="Jier M."/>
            <person name="Johnson D."/>
            <person name="Johnston L."/>
            <person name="Kirsten J."/>
            <person name="Kucaba T."/>
            <person name="Langston Y."/>
            <person name="Latreille P."/>
            <person name="Le T."/>
            <person name="Mardis E."/>
            <person name="Menezes S."/>
            <person name="Miller N."/>
            <person name="Nhan M."/>
            <person name="Pauley A."/>
            <person name="Peluso D."/>
            <person name="Rifkin L."/>
            <person name="Riles L."/>
            <person name="Taich A."/>
            <person name="Trevaskis E."/>
            <person name="Vignati D."/>
            <person name="Wilcox L."/>
            <person name="Wohldman P."/>
            <person name="Vaudin M."/>
            <person name="Wilson R."/>
            <person name="Waterston R."/>
            <person name="Albermann K."/>
            <person name="Hani J."/>
            <person name="Heumann K."/>
            <person name="Kleine K."/>
            <person name="Mewes H.-W."/>
            <person name="Zollner A."/>
            <person name="Zaccaria P."/>
        </authorList>
    </citation>
    <scope>NUCLEOTIDE SEQUENCE [LARGE SCALE GENOMIC DNA]</scope>
    <source>
        <strain>ATCC 204508 / S288c</strain>
    </source>
</reference>
<reference key="4">
    <citation type="journal article" date="2014" name="G3 (Bethesda)">
        <title>The reference genome sequence of Saccharomyces cerevisiae: Then and now.</title>
        <authorList>
            <person name="Engel S.R."/>
            <person name="Dietrich F.S."/>
            <person name="Fisk D.G."/>
            <person name="Binkley G."/>
            <person name="Balakrishnan R."/>
            <person name="Costanzo M.C."/>
            <person name="Dwight S.S."/>
            <person name="Hitz B.C."/>
            <person name="Karra K."/>
            <person name="Nash R.S."/>
            <person name="Weng S."/>
            <person name="Wong E.D."/>
            <person name="Lloyd P."/>
            <person name="Skrzypek M.S."/>
            <person name="Miyasato S.R."/>
            <person name="Simison M."/>
            <person name="Cherry J.M."/>
        </authorList>
    </citation>
    <scope>GENOME REANNOTATION</scope>
    <source>
        <strain>ATCC 204508 / S288c</strain>
    </source>
</reference>
<reference key="5">
    <citation type="journal article" date="2007" name="Genome Res.">
        <title>Approaching a complete repository of sequence-verified protein-encoding clones for Saccharomyces cerevisiae.</title>
        <authorList>
            <person name="Hu Y."/>
            <person name="Rolfs A."/>
            <person name="Bhullar B."/>
            <person name="Murthy T.V.S."/>
            <person name="Zhu C."/>
            <person name="Berger M.F."/>
            <person name="Camargo A.A."/>
            <person name="Kelley F."/>
            <person name="McCarron S."/>
            <person name="Jepson D."/>
            <person name="Richardson A."/>
            <person name="Raphael J."/>
            <person name="Moreira D."/>
            <person name="Taycher E."/>
            <person name="Zuo D."/>
            <person name="Mohr S."/>
            <person name="Kane M.F."/>
            <person name="Williamson J."/>
            <person name="Simpson A.J.G."/>
            <person name="Bulyk M.L."/>
            <person name="Harlow E."/>
            <person name="Marsischky G."/>
            <person name="Kolodner R.D."/>
            <person name="LaBaer J."/>
        </authorList>
    </citation>
    <scope>NUCLEOTIDE SEQUENCE [GENOMIC DNA]</scope>
    <source>
        <strain>ATCC 204508 / S288c</strain>
    </source>
</reference>
<reference key="6">
    <citation type="journal article" date="1999" name="J. Biol. Chem.">
        <title>The Saccharomyces cerevisiae protein Mnn10p/Bed1p is a subunit of a Golgi mannosyltransferase complex.</title>
        <authorList>
            <person name="Jungmann J."/>
            <person name="Rayner J.C."/>
            <person name="Munro S."/>
        </authorList>
    </citation>
    <scope>FUNCTION</scope>
    <scope>SUBUNIT</scope>
</reference>
<reference key="7">
    <citation type="journal article" date="2003" name="Nature">
        <title>Global analysis of protein expression in yeast.</title>
        <authorList>
            <person name="Ghaemmaghami S."/>
            <person name="Huh W.-K."/>
            <person name="Bower K."/>
            <person name="Howson R.W."/>
            <person name="Belle A."/>
            <person name="Dephoure N."/>
            <person name="O'Shea E.K."/>
            <person name="Weissman J.S."/>
        </authorList>
    </citation>
    <scope>LEVEL OF PROTEIN EXPRESSION [LARGE SCALE ANALYSIS]</scope>
</reference>
<gene>
    <name type="primary">MNN10</name>
    <name type="synonym">BED1</name>
    <name type="ordered locus">YDR245W</name>
    <name type="ORF">YD8419.12</name>
</gene>
<name>MNN10_YEAST</name>
<keyword id="KW-0256">Endoplasmic reticulum</keyword>
<keyword id="KW-0328">Glycosyltransferase</keyword>
<keyword id="KW-0333">Golgi apparatus</keyword>
<keyword id="KW-0472">Membrane</keyword>
<keyword id="KW-1185">Reference proteome</keyword>
<keyword id="KW-0735">Signal-anchor</keyword>
<keyword id="KW-0808">Transferase</keyword>
<keyword id="KW-0812">Transmembrane</keyword>
<keyword id="KW-1133">Transmembrane helix</keyword>
<evidence type="ECO:0000255" key="1"/>
<evidence type="ECO:0000256" key="2">
    <source>
        <dbReference type="SAM" id="MobiDB-lite"/>
    </source>
</evidence>
<evidence type="ECO:0000269" key="3">
    <source>
    </source>
</evidence>
<evidence type="ECO:0000269" key="4">
    <source>
    </source>
</evidence>
<evidence type="ECO:0000305" key="5"/>
<protein>
    <recommendedName>
        <fullName>Probable alpha-1,6-mannosyltransferase MNN10</fullName>
        <ecNumber>2.4.1.-</ecNumber>
    </recommendedName>
    <alternativeName>
        <fullName>Bud emergence delay protein 1</fullName>
    </alternativeName>
    <alternativeName>
        <fullName>Mannan polymerase II complex MNN10 subunit</fullName>
        <shortName>M-Pol II subunit MNN10</shortName>
    </alternativeName>
</protein>